<proteinExistence type="inferred from homology"/>
<reference key="1">
    <citation type="journal article" date="2009" name="PLoS Genet.">
        <title>Organised genome dynamics in the Escherichia coli species results in highly diverse adaptive paths.</title>
        <authorList>
            <person name="Touchon M."/>
            <person name="Hoede C."/>
            <person name="Tenaillon O."/>
            <person name="Barbe V."/>
            <person name="Baeriswyl S."/>
            <person name="Bidet P."/>
            <person name="Bingen E."/>
            <person name="Bonacorsi S."/>
            <person name="Bouchier C."/>
            <person name="Bouvet O."/>
            <person name="Calteau A."/>
            <person name="Chiapello H."/>
            <person name="Clermont O."/>
            <person name="Cruveiller S."/>
            <person name="Danchin A."/>
            <person name="Diard M."/>
            <person name="Dossat C."/>
            <person name="Karoui M.E."/>
            <person name="Frapy E."/>
            <person name="Garry L."/>
            <person name="Ghigo J.M."/>
            <person name="Gilles A.M."/>
            <person name="Johnson J."/>
            <person name="Le Bouguenec C."/>
            <person name="Lescat M."/>
            <person name="Mangenot S."/>
            <person name="Martinez-Jehanne V."/>
            <person name="Matic I."/>
            <person name="Nassif X."/>
            <person name="Oztas S."/>
            <person name="Petit M.A."/>
            <person name="Pichon C."/>
            <person name="Rouy Z."/>
            <person name="Ruf C.S."/>
            <person name="Schneider D."/>
            <person name="Tourret J."/>
            <person name="Vacherie B."/>
            <person name="Vallenet D."/>
            <person name="Medigue C."/>
            <person name="Rocha E.P.C."/>
            <person name="Denamur E."/>
        </authorList>
    </citation>
    <scope>NUCLEOTIDE SEQUENCE [LARGE SCALE GENOMIC DNA]</scope>
    <source>
        <strain>55989 / EAEC</strain>
    </source>
</reference>
<organism>
    <name type="scientific">Escherichia coli (strain 55989 / EAEC)</name>
    <dbReference type="NCBI Taxonomy" id="585055"/>
    <lineage>
        <taxon>Bacteria</taxon>
        <taxon>Pseudomonadati</taxon>
        <taxon>Pseudomonadota</taxon>
        <taxon>Gammaproteobacteria</taxon>
        <taxon>Enterobacterales</taxon>
        <taxon>Enterobacteriaceae</taxon>
        <taxon>Escherichia</taxon>
    </lineage>
</organism>
<protein>
    <recommendedName>
        <fullName evidence="1">Cell division inhibitor SulA</fullName>
    </recommendedName>
</protein>
<feature type="chain" id="PRO_1000164429" description="Cell division inhibitor SulA">
    <location>
        <begin position="1"/>
        <end position="169"/>
    </location>
</feature>
<feature type="region of interest" description="FtsZ binding" evidence="1">
    <location>
        <begin position="106"/>
        <end position="112"/>
    </location>
</feature>
<feature type="region of interest" description="Lon protease binding" evidence="1">
    <location>
        <begin position="162"/>
        <end position="169"/>
    </location>
</feature>
<feature type="site" description="Essential for degradation by Lon protease" evidence="1">
    <location>
        <position position="169"/>
    </location>
</feature>
<dbReference type="EMBL" id="CU928145">
    <property type="protein sequence ID" value="CAU96869.1"/>
    <property type="molecule type" value="Genomic_DNA"/>
</dbReference>
<dbReference type="RefSeq" id="WP_000288710.1">
    <property type="nucleotide sequence ID" value="NC_011748.1"/>
</dbReference>
<dbReference type="SMR" id="B7LE58"/>
<dbReference type="GeneID" id="93776456"/>
<dbReference type="KEGG" id="eck:EC55989_1007"/>
<dbReference type="HOGENOM" id="CLU_118972_1_0_6"/>
<dbReference type="Proteomes" id="UP000000746">
    <property type="component" value="Chromosome"/>
</dbReference>
<dbReference type="GO" id="GO:0000917">
    <property type="term" value="P:division septum assembly"/>
    <property type="evidence" value="ECO:0007669"/>
    <property type="project" value="UniProtKB-KW"/>
</dbReference>
<dbReference type="GO" id="GO:0006281">
    <property type="term" value="P:DNA repair"/>
    <property type="evidence" value="ECO:0007669"/>
    <property type="project" value="TreeGrafter"/>
</dbReference>
<dbReference type="GO" id="GO:0051782">
    <property type="term" value="P:negative regulation of cell division"/>
    <property type="evidence" value="ECO:0007669"/>
    <property type="project" value="UniProtKB-UniRule"/>
</dbReference>
<dbReference type="GO" id="GO:0009432">
    <property type="term" value="P:SOS response"/>
    <property type="evidence" value="ECO:0007669"/>
    <property type="project" value="UniProtKB-UniRule"/>
</dbReference>
<dbReference type="FunFam" id="3.40.50.300:FF:000417">
    <property type="entry name" value="Cell division inhibitor SulA"/>
    <property type="match status" value="1"/>
</dbReference>
<dbReference type="Gene3D" id="3.40.50.300">
    <property type="entry name" value="P-loop containing nucleotide triphosphate hydrolases"/>
    <property type="match status" value="1"/>
</dbReference>
<dbReference type="HAMAP" id="MF_01179">
    <property type="entry name" value="SulA"/>
    <property type="match status" value="1"/>
</dbReference>
<dbReference type="InterPro" id="IPR004596">
    <property type="entry name" value="Cell_div_suppressor_SulA"/>
</dbReference>
<dbReference type="InterPro" id="IPR027417">
    <property type="entry name" value="P-loop_NTPase"/>
</dbReference>
<dbReference type="InterPro" id="IPR050356">
    <property type="entry name" value="SulA_CellDiv_inhibitor"/>
</dbReference>
<dbReference type="InterPro" id="IPR047696">
    <property type="entry name" value="SulA_enterobact"/>
</dbReference>
<dbReference type="NCBIfam" id="NF007892">
    <property type="entry name" value="PRK10595.1"/>
    <property type="match status" value="1"/>
</dbReference>
<dbReference type="NCBIfam" id="TIGR00623">
    <property type="entry name" value="SOS_SulA_coli"/>
    <property type="match status" value="1"/>
</dbReference>
<dbReference type="PANTHER" id="PTHR35369">
    <property type="entry name" value="BLR3025 PROTEIN-RELATED"/>
    <property type="match status" value="1"/>
</dbReference>
<dbReference type="PANTHER" id="PTHR35369:SF4">
    <property type="entry name" value="CELL DIVISION INHIBITOR SULA"/>
    <property type="match status" value="1"/>
</dbReference>
<dbReference type="Pfam" id="PF03846">
    <property type="entry name" value="SulA"/>
    <property type="match status" value="1"/>
</dbReference>
<dbReference type="PIRSF" id="PIRSF003093">
    <property type="entry name" value="SulA"/>
    <property type="match status" value="1"/>
</dbReference>
<dbReference type="SUPFAM" id="SSF52540">
    <property type="entry name" value="P-loop containing nucleoside triphosphate hydrolases"/>
    <property type="match status" value="1"/>
</dbReference>
<sequence length="169" mass="18801">MYTSGYAHRSSSFSSAASKIARVSTENTTAGLISEVVYREDQPMMTQLLLLPLLQQLGQQSRWQLWLTPQQKLSREWVQASGLPLTKVMQISQLSPCHTVESMVRALRTGNYSVVIGWLADDLTEEEHAELVDAANEGNAMGFIMRPVSASSHATRQLSGLKIHSNLYH</sequence>
<accession>B7LE58</accession>
<evidence type="ECO:0000255" key="1">
    <source>
        <dbReference type="HAMAP-Rule" id="MF_01179"/>
    </source>
</evidence>
<comment type="function">
    <text evidence="1">Component of the SOS system and an inhibitor of cell division. Accumulation of SulA causes rapid cessation of cell division and the appearance of long, non-septate filaments. In the presence of GTP, binds a polymerization-competent form of FtsZ in a 1:1 ratio, thus inhibiting FtsZ polymerization and therefore preventing it from participating in the assembly of the Z ring. This mechanism prevents the premature segregation of damaged DNA to daughter cells during cell division.</text>
</comment>
<comment type="subunit">
    <text evidence="1">Interacts with FtsZ.</text>
</comment>
<comment type="induction">
    <text evidence="1">By DNA damage, as part of the SOS response.</text>
</comment>
<comment type="PTM">
    <text evidence="1">Is rapidly cleaved and degraded by the Lon protease once DNA damage is repaired.</text>
</comment>
<comment type="similarity">
    <text evidence="1">Belongs to the SulA family.</text>
</comment>
<gene>
    <name evidence="1" type="primary">sulA</name>
    <name type="ordered locus">EC55989_1007</name>
</gene>
<name>SULA_ECO55</name>
<keyword id="KW-0131">Cell cycle</keyword>
<keyword id="KW-0132">Cell division</keyword>
<keyword id="KW-0227">DNA damage</keyword>
<keyword id="KW-1185">Reference proteome</keyword>
<keyword id="KW-0717">Septation</keyword>
<keyword id="KW-0742">SOS response</keyword>